<reference key="1">
    <citation type="journal article" date="2009" name="PLoS Genet.">
        <title>Organised genome dynamics in the Escherichia coli species results in highly diverse adaptive paths.</title>
        <authorList>
            <person name="Touchon M."/>
            <person name="Hoede C."/>
            <person name="Tenaillon O."/>
            <person name="Barbe V."/>
            <person name="Baeriswyl S."/>
            <person name="Bidet P."/>
            <person name="Bingen E."/>
            <person name="Bonacorsi S."/>
            <person name="Bouchier C."/>
            <person name="Bouvet O."/>
            <person name="Calteau A."/>
            <person name="Chiapello H."/>
            <person name="Clermont O."/>
            <person name="Cruveiller S."/>
            <person name="Danchin A."/>
            <person name="Diard M."/>
            <person name="Dossat C."/>
            <person name="Karoui M.E."/>
            <person name="Frapy E."/>
            <person name="Garry L."/>
            <person name="Ghigo J.M."/>
            <person name="Gilles A.M."/>
            <person name="Johnson J."/>
            <person name="Le Bouguenec C."/>
            <person name="Lescat M."/>
            <person name="Mangenot S."/>
            <person name="Martinez-Jehanne V."/>
            <person name="Matic I."/>
            <person name="Nassif X."/>
            <person name="Oztas S."/>
            <person name="Petit M.A."/>
            <person name="Pichon C."/>
            <person name="Rouy Z."/>
            <person name="Ruf C.S."/>
            <person name="Schneider D."/>
            <person name="Tourret J."/>
            <person name="Vacherie B."/>
            <person name="Vallenet D."/>
            <person name="Medigue C."/>
            <person name="Rocha E.P.C."/>
            <person name="Denamur E."/>
        </authorList>
    </citation>
    <scope>NUCLEOTIDE SEQUENCE [LARGE SCALE GENOMIC DNA]</scope>
    <source>
        <strain>55989 / EAEC</strain>
    </source>
</reference>
<gene>
    <name evidence="1" type="primary">lexA</name>
    <name type="ordered locus">EC55989_4536</name>
</gene>
<comment type="function">
    <text evidence="1">Represses a number of genes involved in the response to DNA damage (SOS response), including recA and lexA. Binds to the 16 bp palindromic sequence 5'-CTGTATATATATACAG-3'. In the presence of single-stranded DNA, RecA interacts with LexA causing an autocatalytic cleavage which disrupts the DNA-binding part of LexA, leading to derepression of the SOS regulon and eventually DNA repair.</text>
</comment>
<comment type="catalytic activity">
    <reaction evidence="1">
        <text>Hydrolysis of Ala-|-Gly bond in repressor LexA.</text>
        <dbReference type="EC" id="3.4.21.88"/>
    </reaction>
</comment>
<comment type="subunit">
    <text evidence="1">Homodimer.</text>
</comment>
<comment type="similarity">
    <text evidence="1">Belongs to the peptidase S24 family.</text>
</comment>
<evidence type="ECO:0000255" key="1">
    <source>
        <dbReference type="HAMAP-Rule" id="MF_00015"/>
    </source>
</evidence>
<name>LEXA_ECO55</name>
<accession>B7LAZ0</accession>
<keyword id="KW-0068">Autocatalytic cleavage</keyword>
<keyword id="KW-0227">DNA damage</keyword>
<keyword id="KW-0234">DNA repair</keyword>
<keyword id="KW-0235">DNA replication</keyword>
<keyword id="KW-0238">DNA-binding</keyword>
<keyword id="KW-0378">Hydrolase</keyword>
<keyword id="KW-1185">Reference proteome</keyword>
<keyword id="KW-0678">Repressor</keyword>
<keyword id="KW-0742">SOS response</keyword>
<keyword id="KW-0804">Transcription</keyword>
<keyword id="KW-0805">Transcription regulation</keyword>
<sequence>MKALTARQQEVFDLIRDHISQTGMPPTRAEIAQRLGFRSPNAAEEHLKALARKGVIEIVSGASRGIRLLQEEEEGLPLVGRVAAGEPLLAQQHIEGHYQVDPSLFKPNADFLLRVSGMSMKDIGIMDGDLLAVHKTQDVRNGQVVVARIDDEVTVKRLKKQGNKVELLPENSEFKPIVVDLRQQSFTIEGLAVGVIRNGDWL</sequence>
<feature type="chain" id="PRO_1000116605" description="LexA repressor">
    <location>
        <begin position="1"/>
        <end position="202"/>
    </location>
</feature>
<feature type="DNA-binding region" description="H-T-H motif" evidence="1">
    <location>
        <begin position="28"/>
        <end position="48"/>
    </location>
</feature>
<feature type="active site" description="For autocatalytic cleavage activity" evidence="1">
    <location>
        <position position="119"/>
    </location>
</feature>
<feature type="active site" description="For autocatalytic cleavage activity" evidence="1">
    <location>
        <position position="156"/>
    </location>
</feature>
<feature type="site" description="Cleavage; by autolysis" evidence="1">
    <location>
        <begin position="84"/>
        <end position="85"/>
    </location>
</feature>
<proteinExistence type="inferred from homology"/>
<organism>
    <name type="scientific">Escherichia coli (strain 55989 / EAEC)</name>
    <dbReference type="NCBI Taxonomy" id="585055"/>
    <lineage>
        <taxon>Bacteria</taxon>
        <taxon>Pseudomonadati</taxon>
        <taxon>Pseudomonadota</taxon>
        <taxon>Gammaproteobacteria</taxon>
        <taxon>Enterobacterales</taxon>
        <taxon>Enterobacteriaceae</taxon>
        <taxon>Escherichia</taxon>
    </lineage>
</organism>
<dbReference type="EC" id="3.4.21.88" evidence="1"/>
<dbReference type="EMBL" id="CU928145">
    <property type="protein sequence ID" value="CAV01328.1"/>
    <property type="molecule type" value="Genomic_DNA"/>
</dbReference>
<dbReference type="RefSeq" id="WP_000646078.1">
    <property type="nucleotide sequence ID" value="NZ_CP028304.1"/>
</dbReference>
<dbReference type="SMR" id="B7LAZ0"/>
<dbReference type="MEROPS" id="S24.001"/>
<dbReference type="GeneID" id="93777788"/>
<dbReference type="KEGG" id="eck:EC55989_4536"/>
<dbReference type="HOGENOM" id="CLU_066192_45_3_6"/>
<dbReference type="Proteomes" id="UP000000746">
    <property type="component" value="Chromosome"/>
</dbReference>
<dbReference type="GO" id="GO:0003677">
    <property type="term" value="F:DNA binding"/>
    <property type="evidence" value="ECO:0007669"/>
    <property type="project" value="UniProtKB-UniRule"/>
</dbReference>
<dbReference type="GO" id="GO:0004252">
    <property type="term" value="F:serine-type endopeptidase activity"/>
    <property type="evidence" value="ECO:0007669"/>
    <property type="project" value="UniProtKB-UniRule"/>
</dbReference>
<dbReference type="GO" id="GO:0006281">
    <property type="term" value="P:DNA repair"/>
    <property type="evidence" value="ECO:0007669"/>
    <property type="project" value="UniProtKB-UniRule"/>
</dbReference>
<dbReference type="GO" id="GO:0006260">
    <property type="term" value="P:DNA replication"/>
    <property type="evidence" value="ECO:0007669"/>
    <property type="project" value="UniProtKB-UniRule"/>
</dbReference>
<dbReference type="GO" id="GO:0045892">
    <property type="term" value="P:negative regulation of DNA-templated transcription"/>
    <property type="evidence" value="ECO:0007669"/>
    <property type="project" value="UniProtKB-UniRule"/>
</dbReference>
<dbReference type="GO" id="GO:0006508">
    <property type="term" value="P:proteolysis"/>
    <property type="evidence" value="ECO:0007669"/>
    <property type="project" value="InterPro"/>
</dbReference>
<dbReference type="GO" id="GO:0009432">
    <property type="term" value="P:SOS response"/>
    <property type="evidence" value="ECO:0007669"/>
    <property type="project" value="UniProtKB-UniRule"/>
</dbReference>
<dbReference type="CDD" id="cd06529">
    <property type="entry name" value="S24_LexA-like"/>
    <property type="match status" value="1"/>
</dbReference>
<dbReference type="FunFam" id="1.10.10.10:FF:000009">
    <property type="entry name" value="LexA repressor"/>
    <property type="match status" value="1"/>
</dbReference>
<dbReference type="FunFam" id="2.10.109.10:FF:000001">
    <property type="entry name" value="LexA repressor"/>
    <property type="match status" value="1"/>
</dbReference>
<dbReference type="Gene3D" id="2.10.109.10">
    <property type="entry name" value="Umud Fragment, subunit A"/>
    <property type="match status" value="1"/>
</dbReference>
<dbReference type="Gene3D" id="1.10.10.10">
    <property type="entry name" value="Winged helix-like DNA-binding domain superfamily/Winged helix DNA-binding domain"/>
    <property type="match status" value="1"/>
</dbReference>
<dbReference type="HAMAP" id="MF_00015">
    <property type="entry name" value="LexA"/>
    <property type="match status" value="1"/>
</dbReference>
<dbReference type="InterPro" id="IPR006200">
    <property type="entry name" value="LexA"/>
</dbReference>
<dbReference type="InterPro" id="IPR039418">
    <property type="entry name" value="LexA-like"/>
</dbReference>
<dbReference type="InterPro" id="IPR036286">
    <property type="entry name" value="LexA/Signal_pep-like_sf"/>
</dbReference>
<dbReference type="InterPro" id="IPR006199">
    <property type="entry name" value="LexA_DNA-bd_dom"/>
</dbReference>
<dbReference type="InterPro" id="IPR050077">
    <property type="entry name" value="LexA_repressor"/>
</dbReference>
<dbReference type="InterPro" id="IPR006197">
    <property type="entry name" value="Peptidase_S24_LexA"/>
</dbReference>
<dbReference type="InterPro" id="IPR015927">
    <property type="entry name" value="Peptidase_S24_S26A/B/C"/>
</dbReference>
<dbReference type="InterPro" id="IPR036388">
    <property type="entry name" value="WH-like_DNA-bd_sf"/>
</dbReference>
<dbReference type="InterPro" id="IPR036390">
    <property type="entry name" value="WH_DNA-bd_sf"/>
</dbReference>
<dbReference type="NCBIfam" id="TIGR00498">
    <property type="entry name" value="lexA"/>
    <property type="match status" value="1"/>
</dbReference>
<dbReference type="PANTHER" id="PTHR33516">
    <property type="entry name" value="LEXA REPRESSOR"/>
    <property type="match status" value="1"/>
</dbReference>
<dbReference type="PANTHER" id="PTHR33516:SF2">
    <property type="entry name" value="LEXA REPRESSOR-RELATED"/>
    <property type="match status" value="1"/>
</dbReference>
<dbReference type="Pfam" id="PF01726">
    <property type="entry name" value="LexA_DNA_bind"/>
    <property type="match status" value="1"/>
</dbReference>
<dbReference type="Pfam" id="PF00717">
    <property type="entry name" value="Peptidase_S24"/>
    <property type="match status" value="1"/>
</dbReference>
<dbReference type="PRINTS" id="PR00726">
    <property type="entry name" value="LEXASERPTASE"/>
</dbReference>
<dbReference type="SUPFAM" id="SSF51306">
    <property type="entry name" value="LexA/Signal peptidase"/>
    <property type="match status" value="1"/>
</dbReference>
<dbReference type="SUPFAM" id="SSF46785">
    <property type="entry name" value="Winged helix' DNA-binding domain"/>
    <property type="match status" value="1"/>
</dbReference>
<protein>
    <recommendedName>
        <fullName evidence="1">LexA repressor</fullName>
        <ecNumber evidence="1">3.4.21.88</ecNumber>
    </recommendedName>
</protein>